<feature type="chain" id="PRO_0000233653" description="Cytochrome b559 subunit beta">
    <location>
        <begin position="1"/>
        <end position="39"/>
    </location>
</feature>
<feature type="transmembrane region" description="Helical" evidence="1">
    <location>
        <begin position="14"/>
        <end position="30"/>
    </location>
</feature>
<feature type="binding site" description="axial binding residue" evidence="1">
    <location>
        <position position="18"/>
    </location>
    <ligand>
        <name>heme</name>
        <dbReference type="ChEBI" id="CHEBI:30413"/>
        <note>ligand shared with alpha subunit</note>
    </ligand>
    <ligandPart>
        <name>Fe</name>
        <dbReference type="ChEBI" id="CHEBI:18248"/>
    </ligandPart>
</feature>
<keyword id="KW-0150">Chloroplast</keyword>
<keyword id="KW-0249">Electron transport</keyword>
<keyword id="KW-0349">Heme</keyword>
<keyword id="KW-0408">Iron</keyword>
<keyword id="KW-0472">Membrane</keyword>
<keyword id="KW-0479">Metal-binding</keyword>
<keyword id="KW-0602">Photosynthesis</keyword>
<keyword id="KW-0604">Photosystem II</keyword>
<keyword id="KW-0934">Plastid</keyword>
<keyword id="KW-0793">Thylakoid</keyword>
<keyword id="KW-0812">Transmembrane</keyword>
<keyword id="KW-1133">Transmembrane helix</keyword>
<keyword id="KW-0813">Transport</keyword>
<proteinExistence type="inferred from homology"/>
<sequence length="39" mass="4498">MTIDRTYPIFTVRWLAIHGLAVPTVFFLGSISAMQFIQR</sequence>
<evidence type="ECO:0000255" key="1">
    <source>
        <dbReference type="HAMAP-Rule" id="MF_00643"/>
    </source>
</evidence>
<name>PSBF_ZYGCR</name>
<organism>
    <name type="scientific">Zygnema circumcarinatum</name>
    <name type="common">Green alga</name>
    <dbReference type="NCBI Taxonomy" id="35869"/>
    <lineage>
        <taxon>Eukaryota</taxon>
        <taxon>Viridiplantae</taxon>
        <taxon>Streptophyta</taxon>
        <taxon>Zygnematophyceae</taxon>
        <taxon>Zygnematophycidae</taxon>
        <taxon>Zygnematales</taxon>
        <taxon>Zygnemataceae</taxon>
        <taxon>Zygnema</taxon>
    </lineage>
</organism>
<gene>
    <name evidence="1" type="primary">psbF</name>
</gene>
<dbReference type="EMBL" id="AY958086">
    <property type="protein sequence ID" value="AAX45841.1"/>
    <property type="molecule type" value="Genomic_DNA"/>
</dbReference>
<dbReference type="RefSeq" id="YP_636530.1">
    <property type="nucleotide sequence ID" value="NC_008117.1"/>
</dbReference>
<dbReference type="SMR" id="Q32RJ6"/>
<dbReference type="GeneID" id="4108161"/>
<dbReference type="GO" id="GO:0009535">
    <property type="term" value="C:chloroplast thylakoid membrane"/>
    <property type="evidence" value="ECO:0007669"/>
    <property type="project" value="UniProtKB-SubCell"/>
</dbReference>
<dbReference type="GO" id="GO:0009539">
    <property type="term" value="C:photosystem II reaction center"/>
    <property type="evidence" value="ECO:0007669"/>
    <property type="project" value="InterPro"/>
</dbReference>
<dbReference type="GO" id="GO:0009055">
    <property type="term" value="F:electron transfer activity"/>
    <property type="evidence" value="ECO:0007669"/>
    <property type="project" value="UniProtKB-UniRule"/>
</dbReference>
<dbReference type="GO" id="GO:0020037">
    <property type="term" value="F:heme binding"/>
    <property type="evidence" value="ECO:0007669"/>
    <property type="project" value="InterPro"/>
</dbReference>
<dbReference type="GO" id="GO:0005506">
    <property type="term" value="F:iron ion binding"/>
    <property type="evidence" value="ECO:0007669"/>
    <property type="project" value="UniProtKB-UniRule"/>
</dbReference>
<dbReference type="GO" id="GO:0009767">
    <property type="term" value="P:photosynthetic electron transport chain"/>
    <property type="evidence" value="ECO:0007669"/>
    <property type="project" value="InterPro"/>
</dbReference>
<dbReference type="HAMAP" id="MF_00643">
    <property type="entry name" value="PSII_PsbF"/>
    <property type="match status" value="1"/>
</dbReference>
<dbReference type="InterPro" id="IPR006241">
    <property type="entry name" value="PSII_cyt_b559_bsu"/>
</dbReference>
<dbReference type="InterPro" id="IPR006216">
    <property type="entry name" value="PSII_cyt_b559_CS"/>
</dbReference>
<dbReference type="InterPro" id="IPR013081">
    <property type="entry name" value="PSII_cyt_b559_N"/>
</dbReference>
<dbReference type="NCBIfam" id="TIGR01333">
    <property type="entry name" value="cyt_b559_beta"/>
    <property type="match status" value="1"/>
</dbReference>
<dbReference type="Pfam" id="PF00283">
    <property type="entry name" value="Cytochrom_B559"/>
    <property type="match status" value="1"/>
</dbReference>
<dbReference type="PIRSF" id="PIRSF000037">
    <property type="entry name" value="PsbF"/>
    <property type="match status" value="1"/>
</dbReference>
<dbReference type="SUPFAM" id="SSF161045">
    <property type="entry name" value="Cytochrome b559 subunits"/>
    <property type="match status" value="1"/>
</dbReference>
<dbReference type="PROSITE" id="PS00537">
    <property type="entry name" value="CYTOCHROME_B559"/>
    <property type="match status" value="1"/>
</dbReference>
<protein>
    <recommendedName>
        <fullName evidence="1">Cytochrome b559 subunit beta</fullName>
    </recommendedName>
    <alternativeName>
        <fullName evidence="1">PSII reaction center subunit VI</fullName>
    </alternativeName>
</protein>
<geneLocation type="chloroplast"/>
<reference key="1">
    <citation type="journal article" date="2005" name="BMC Biol.">
        <title>The complete chloroplast DNA sequences of the charophycean green algae Staurastrum and Zygnema reveal that the chloroplast genome underwent extensive changes during the evolution of the Zygnematales.</title>
        <authorList>
            <person name="Turmel M."/>
            <person name="Otis C."/>
            <person name="Lemieux C."/>
        </authorList>
    </citation>
    <scope>NUCLEOTIDE SEQUENCE [LARGE SCALE GENOMIC DNA]</scope>
</reference>
<comment type="function">
    <text evidence="1">This b-type cytochrome is tightly associated with the reaction center of photosystem II (PSII). PSII is a light-driven water:plastoquinone oxidoreductase that uses light energy to abstract electrons from H(2)O, generating O(2) and a proton gradient subsequently used for ATP formation. It consists of a core antenna complex that captures photons, and an electron transfer chain that converts photonic excitation into a charge separation.</text>
</comment>
<comment type="cofactor">
    <cofactor evidence="1">
        <name>heme b</name>
        <dbReference type="ChEBI" id="CHEBI:60344"/>
    </cofactor>
    <text evidence="1">With its partner (PsbE) binds heme. PSII binds additional chlorophylls, carotenoids and specific lipids.</text>
</comment>
<comment type="subunit">
    <text evidence="1">Heterodimer of an alpha subunit and a beta subunit. PSII is composed of 1 copy each of membrane proteins PsbA, PsbB, PsbC, PsbD, PsbE, PsbF, PsbH, PsbI, PsbJ, PsbK, PsbL, PsbM, PsbT, PsbX, PsbY, PsbZ, Psb30/Ycf12, at least 3 peripheral proteins of the oxygen-evolving complex and a large number of cofactors. It forms dimeric complexes.</text>
</comment>
<comment type="subcellular location">
    <subcellularLocation>
        <location evidence="1">Plastid</location>
        <location evidence="1">Chloroplast thylakoid membrane</location>
        <topology evidence="1">Single-pass membrane protein</topology>
    </subcellularLocation>
</comment>
<comment type="similarity">
    <text evidence="1">Belongs to the PsbE/PsbF family.</text>
</comment>
<accession>Q32RJ6</accession>